<reference key="1">
    <citation type="journal article" date="2003" name="J. Bacteriol.">
        <title>Characterization of a spontaneous nonmagnetic mutant of Magnetospirillum gryphiswaldense reveals a large deletion comprising a putative magnetosome island.</title>
        <authorList>
            <person name="Schuebbe S."/>
            <person name="Kube M."/>
            <person name="Scheffel A."/>
            <person name="Wawer C."/>
            <person name="Heyen U."/>
            <person name="Meyerdierks A."/>
            <person name="Madkour M.H."/>
            <person name="Mayer F."/>
            <person name="Reinhardt R."/>
            <person name="Schueler D."/>
        </authorList>
    </citation>
    <scope>NUCLEOTIDE SEQUENCE [GENOMIC DNA]</scope>
    <scope>PROBABLE OPERON</scope>
    <scope>DISRUPTION PHENOTYPE</scope>
    <source>
        <strain>DSM 6361 / JCM 21280 / NBRC 15271 / MSR-1</strain>
    </source>
</reference>
<reference key="2">
    <citation type="journal article" date="2005" name="J. Bacteriol.">
        <title>A hypervariable 130-kilobase genomic region of Magnetospirillum gryphiswaldense comprises a magnetosome island which undergoes frequent rearrangements during stationary growth.</title>
        <authorList>
            <person name="Ullrich S."/>
            <person name="Kube M."/>
            <person name="Schuebbe S."/>
            <person name="Reinhardt R."/>
            <person name="Schueler D."/>
        </authorList>
    </citation>
    <scope>NUCLEOTIDE SEQUENCE [GENOMIC DNA]</scope>
    <source>
        <strain>DSM 6361 / JCM 21280 / NBRC 15271 / MSR-1</strain>
    </source>
</reference>
<reference key="3">
    <citation type="journal article" date="2007" name="J. Bacteriol.">
        <title>Comparative genome analysis of four magnetotactic bacteria reveals a complex set of group-specific genes implicated in magnetosome biomineralization and function.</title>
        <authorList>
            <person name="Richter M."/>
            <person name="Kube M."/>
            <person name="Bazylinski D.A."/>
            <person name="Lombardot T."/>
            <person name="Gloeckner F.O."/>
            <person name="Reinhardt R."/>
            <person name="Schueler D."/>
        </authorList>
    </citation>
    <scope>NUCLEOTIDE SEQUENCE [LARGE SCALE GENOMIC DNA]</scope>
    <source>
        <strain>DSM 6361 / JCM 21280 / NBRC 15271 / MSR-1</strain>
    </source>
</reference>
<reference key="4">
    <citation type="journal article" date="2014" name="Genome Announc.">
        <title>Complete genome sequence of Magnetospirillum gryphiswaldense MSR-1.</title>
        <authorList>
            <person name="Wang X."/>
            <person name="Wang Q."/>
            <person name="Zhang W."/>
            <person name="Wang Y."/>
            <person name="Li L."/>
            <person name="Wen T."/>
            <person name="Zhang T."/>
            <person name="Zhang Y."/>
            <person name="Xu J."/>
            <person name="Hu J."/>
            <person name="Li S."/>
            <person name="Liu L."/>
            <person name="Liu J."/>
            <person name="Jiang W."/>
            <person name="Tian J."/>
            <person name="Li Y."/>
            <person name="Schuler D."/>
            <person name="Wang L."/>
            <person name="Li J."/>
        </authorList>
    </citation>
    <scope>NUCLEOTIDE SEQUENCE [LARGE SCALE GENOMIC DNA]</scope>
    <source>
        <strain>DSM 6361 / JCM 21280 / NBRC 15271 / MSR-1</strain>
    </source>
</reference>
<reference key="5">
    <citation type="journal article" date="2007" name="J. Bacteriol.">
        <title>The acidic repetitive domain of the Magnetospirillum gryphiswaldense MamJ protein displays hypervariability but is not required for magnetosome chain assembly.</title>
        <authorList>
            <person name="Scheffel A."/>
            <person name="Schueler D."/>
        </authorList>
    </citation>
    <scope>SUBUNIT</scope>
    <scope>INTERACTION WITH MAMJ</scope>
    <scope>SUBCELLULAR LOCATION</scope>
    <source>
        <strain>DSM 6361 / JCM 21280 / NBRC 15271 / MSR-1</strain>
    </source>
</reference>
<reference key="6">
    <citation type="journal article" date="2010" name="Mol. Microbiol.">
        <title>Loss of the actin-like protein MamK has pleiotropic effects on magnetosome formation and chain assembly in Magnetospirillum gryphiswaldense.</title>
        <authorList>
            <person name="Katzmann E."/>
            <person name="Scheffel A."/>
            <person name="Gruska M."/>
            <person name="Plitzko J.M."/>
            <person name="Schueler D."/>
        </authorList>
    </citation>
    <scope>FUNCTION</scope>
    <scope>SUBCELLULAR LOCATION</scope>
    <scope>DISRUPTION PHENOTYPE</scope>
    <source>
        <strain>DSM 6361 / JCM 21280 / NBRC 15271 / MSR-1</strain>
    </source>
</reference>
<reference key="7">
    <citation type="journal article" date="2011" name="Mol. Microbiol.">
        <title>Magnetosome chains are recruited to cellular division sites and split by asymmetric septation.</title>
        <authorList>
            <person name="Katzmann E."/>
            <person name="Mueller F.D."/>
            <person name="Lang C."/>
            <person name="Messerer M."/>
            <person name="Winklhofer M."/>
            <person name="Plitzko J.M."/>
            <person name="Schueler D."/>
        </authorList>
    </citation>
    <scope>FUNCTION IN MAGNETOSOME SEGREGATION</scope>
    <scope>SUBCELLULAR LOCATION</scope>
    <scope>DISRUPTION PHENOTYPE</scope>
    <source>
        <strain>DSM 6361 / JCM 21280 / NBRC 15271 / MSR-1</strain>
    </source>
</reference>
<reference key="8">
    <citation type="journal article" date="2011" name="PLoS ONE">
        <title>Functional analysis of the magnetosome island in Magnetospirillum gryphiswaldense: the mamAB operon is sufficient for magnetite biomineralization.</title>
        <authorList>
            <person name="Lohsse A."/>
            <person name="Ullrich S."/>
            <person name="Katzmann E."/>
            <person name="Borg S."/>
            <person name="Wanner G."/>
            <person name="Richter M."/>
            <person name="Voigt B."/>
            <person name="Schweder T."/>
            <person name="Schueler D."/>
        </authorList>
    </citation>
    <scope>MINIMAL MAGNETOSOME ISLAND</scope>
    <scope>PROBABLE OPERON</scope>
    <scope>DISRUPTION PHENOTYPE</scope>
    <source>
        <strain>DSM 6361 / JCM 21280 / NBRC 15271 / MSR-1</strain>
    </source>
</reference>
<reference key="9">
    <citation type="journal article" date="2012" name="PLoS ONE">
        <title>Insight into the assembly properties and functional organisation of the magnetotactic bacterial actin-like homolog, MamK.</title>
        <authorList>
            <person name="Sonkaria S."/>
            <person name="Fuentes G."/>
            <person name="Verma C."/>
            <person name="Narang R."/>
            <person name="Khare V."/>
            <person name="Fischer A."/>
            <person name="Faivre D."/>
        </authorList>
    </citation>
    <scope>FUNCTION</scope>
    <scope>ATPASE ACTIVITY</scope>
    <scope>FORMS FILAMENTS</scope>
    <scope>SUBUNIT</scope>
    <scope>SUBCELLULAR LOCATION</scope>
    <source>
        <strain>DSM 6361 / JCM 21280 / NBRC 15271 / MSR-1</strain>
    </source>
</reference>
<reference key="10">
    <citation type="journal article" date="2014" name="J. Bacteriol.">
        <title>The FtsZ-like protein FtsZm of Magnetospirillum gryphiswaldense likely interacts with its generic homolog and is required for biomineralization under nitrate deprivation.</title>
        <authorList>
            <person name="Mueller F.D."/>
            <person name="Raschdorf O."/>
            <person name="Nudelman H."/>
            <person name="Messerer M."/>
            <person name="Katzmann E."/>
            <person name="Plitzko J.M."/>
            <person name="Zarivach R."/>
            <person name="Schueler D."/>
        </authorList>
    </citation>
    <scope>FORMS FILAMENTS</scope>
    <scope>SUBCELLULAR LOCATION</scope>
    <source>
        <strain>DSM 6361 / JCM 21280 / NBRC 15271 / MSR-1</strain>
    </source>
</reference>
<reference key="11">
    <citation type="journal article" date="2016" name="BMC Biol.">
        <title>Segregation of prokaryotic magnetosomes organelles is driven by treadmilling of a dynamic actin-like MamK filament.</title>
        <authorList>
            <person name="Toro-Nahuelpan M."/>
            <person name="Mueller F.D."/>
            <person name="Klumpp S."/>
            <person name="Plitzko J.M."/>
            <person name="Bramkamp M."/>
            <person name="Schueler D."/>
        </authorList>
    </citation>
    <scope>FUNCTION IN MAGNETOSOME SEGREGATION</scope>
    <scope>ACTIVITY REGULATION</scope>
    <scope>DISRUPTION PHENOTYPE</scope>
    <scope>MUTAGENESIS OF ASP-174</scope>
    <source>
        <strain>DSM 6361 / JCM 21280 / NBRC 15271 / MSR-1</strain>
    </source>
</reference>
<comment type="function">
    <text evidence="4 5 7 9">Protein with ATPase activity which forms dynamic cytoplasmic filaments that are involved in sorting, concatenating and/or correctly positioning of magnetosomes in the cell. Not absolutely necessary for assembly of short chains (PubMed:20487281, PubMed:22586444, PubMed:27733152). Filaments grow from the both cell poles towards midcell, and are probably disassembled at the other end of the cell, a process known as treadmilling (PubMed:27733152). Polymerizes in the presence of ATP, GTP or a non-hydrolyzable ATP analog (PubMed:22586444). Required for correct segregation and positioning of magnetosomes following cell division (PubMed:22026731, PubMed:27733152).</text>
</comment>
<comment type="catalytic activity">
    <reaction evidence="7">
        <text>ATP + H2O = ADP + phosphate + H(+)</text>
        <dbReference type="Rhea" id="RHEA:13065"/>
        <dbReference type="ChEBI" id="CHEBI:15377"/>
        <dbReference type="ChEBI" id="CHEBI:15378"/>
        <dbReference type="ChEBI" id="CHEBI:30616"/>
        <dbReference type="ChEBI" id="CHEBI:43474"/>
        <dbReference type="ChEBI" id="CHEBI:456216"/>
    </reaction>
</comment>
<comment type="activity regulation">
    <text evidence="9">Filament dynamics depend partially on MamJ.</text>
</comment>
<comment type="subunit">
    <text evidence="3 4 5 7 8">Forms cytoplasmic filaments (PubMed:17601786, PubMed:20487281, PubMed:22026731, PubMed:22586444, PubMed:24272781). Interacts with MamJ (PubMed:17601786). Forms filaments in the absence of other magnetosome proteins and in E.coli (PubMed:20487281). Filament formation in vitro requires ATP, GTP or a non-hydrolyzable ATP analog (PubMed:22586444).</text>
</comment>
<comment type="subcellular location">
    <subcellularLocation>
        <location evidence="14 15 16 18 19">Cytoplasm</location>
    </subcellularLocation>
    <subcellularLocation>
        <location evidence="3 4">Cytoplasm</location>
        <location evidence="3 4">Cytoskeleton</location>
    </subcellularLocation>
    <text evidence="3 4 8">Tagged protein forms straight lines extending along most of the cell associated with its inner curvature, in the correct position to be filaments that are seen associated with magnetosomes (PubMed:17601786, PubMed:20487281). The exact pattern depends on the N- or C-terminal location of the tag and the length of the linker to the rest of the protein (PubMed:20487281). Individual filaments are 3-6 nm in diameter and 0.5-1 nm in length and occasionally form bundles. Filaments are in close proximity to magnetosome membranes. Most are near midcell, however some extend to nearly the cell pole; they are not seen in a deletion mutant (PubMed:20487281). Filaments do not colocalize with FtsZ-like (also called FtsZm) foci (PubMed:24272781).</text>
</comment>
<comment type="induction">
    <text evidence="13 17">Part of the probable 17 gene mamAB operon.</text>
</comment>
<comment type="disruption phenotype">
    <text evidence="2 4 5 6 9">Non-polar single gene deletion has wild-type growth and motility. Has half the number of magnetosomes which are mostly incorrectly positioned and of lower chain length; magnetite crystals and magnetosome morphology are normal. No magnetosome-associated filaments are seen (PubMed:20487281, PubMed:27733152). Incorrect subcellular location of MamJ (PubMed:20487281). Incorrect positioning of magnetosomes in dividing cells, leads to uneven distribution of magnetosome crystals (PubMed:22026731, PubMed:27733152). Deletion of 3 consecutive genes (mamJ, mamK, mamL) leads to cells devoid of magnetosomes or a magnetic response (PubMed:22043287). Deletion of approximately 80 kb of DNA, including this operon, leads to cells that are non-magnetic, lack internal membrane systems, grow poorly, have reduced mobility and take-up and accumulate iron poorly (PubMed:13129949).</text>
</comment>
<comment type="miscellaneous">
    <text evidence="13">This bacteria makes up to 60 cubo-octahedral magnetosomes of about 45 nm in diameter which contain membrane-bound crystals of magnetite (Fe(3)O(4)).</text>
</comment>
<comment type="miscellaneous">
    <text evidence="6">Expression of just the minimal mamAB gene cluster (MGMSRv2__2365 to MGMSRv2__2381), including this gene, is sufficient to form a minimal magnetosome chain with small magnetite particles.</text>
</comment>
<comment type="miscellaneous">
    <text evidence="12">In the related bacteria M.magneticum strain AMB the magnetosome position remains stable during cytokinesis.</text>
</comment>
<comment type="similarity">
    <text evidence="12">Belongs to the FtsA/MreB family. MamK subfamily.</text>
</comment>
<comment type="caution">
    <text evidence="12">It is uncertain whether Met-1 or Met-14 is the initiator.</text>
</comment>
<comment type="sequence caution" evidence="12">
    <conflict type="erroneous initiation">
        <sequence resource="EMBL-CDS" id="CDK99592"/>
    </conflict>
    <text>Truncated N-terminus.</text>
</comment>
<gene>
    <name evidence="10" type="primary">mamK</name>
    <name type="ordered locus">MGMSRv2__2377</name>
    <name type="ORF">mgI489</name>
    <name type="ORF">MGR_4093</name>
</gene>
<protein>
    <recommendedName>
        <fullName evidence="11">Actin-like protein MamK</fullName>
        <ecNumber evidence="7">3.6.1.-</ecNumber>
    </recommendedName>
    <alternativeName>
        <fullName evidence="12">Magnetosome cytoskeleton protein MamK</fullName>
    </alternativeName>
</protein>
<keyword id="KW-0067">ATP-binding</keyword>
<keyword id="KW-0091">Biomineralization</keyword>
<keyword id="KW-0963">Cytoplasm</keyword>
<keyword id="KW-0206">Cytoskeleton</keyword>
<keyword id="KW-0342">GTP-binding</keyword>
<keyword id="KW-0378">Hydrolase</keyword>
<keyword id="KW-0460">Magnesium</keyword>
<keyword id="KW-0479">Metal-binding</keyword>
<keyword id="KW-0547">Nucleotide-binding</keyword>
<keyword id="KW-1185">Reference proteome</keyword>
<feature type="chain" id="PRO_0000447773" description="Actin-like protein MamK">
    <location>
        <begin position="1"/>
        <end position="360"/>
    </location>
</feature>
<feature type="binding site" evidence="1">
    <location>
        <position position="22"/>
    </location>
    <ligand>
        <name>ATP</name>
        <dbReference type="ChEBI" id="CHEBI:30616"/>
    </ligand>
</feature>
<feature type="binding site" evidence="1">
    <location>
        <begin position="33"/>
        <end position="34"/>
    </location>
    <ligand>
        <name>ATP</name>
        <dbReference type="ChEBI" id="CHEBI:30616"/>
    </ligand>
</feature>
<feature type="binding site" evidence="1">
    <location>
        <position position="89"/>
    </location>
    <ligand>
        <name>ATP</name>
        <dbReference type="ChEBI" id="CHEBI:30616"/>
    </ligand>
</feature>
<feature type="binding site" evidence="1">
    <location>
        <position position="156"/>
    </location>
    <ligand>
        <name>Mg(2+)</name>
        <dbReference type="ChEBI" id="CHEBI:18420"/>
    </ligand>
</feature>
<feature type="binding site" evidence="1">
    <location>
        <begin position="177"/>
        <end position="179"/>
    </location>
    <ligand>
        <name>ATP</name>
        <dbReference type="ChEBI" id="CHEBI:30616"/>
    </ligand>
</feature>
<feature type="binding site" evidence="1">
    <location>
        <begin position="231"/>
        <end position="235"/>
    </location>
    <ligand>
        <name>ATP</name>
        <dbReference type="ChEBI" id="CHEBI:30616"/>
    </ligand>
</feature>
<feature type="binding site" evidence="1">
    <location>
        <position position="302"/>
    </location>
    <ligand>
        <name>ATP</name>
        <dbReference type="ChEBI" id="CHEBI:30616"/>
    </ligand>
</feature>
<feature type="mutagenesis site" description="Magnetosome chain partitioning, movement and placement in cell is seriously impaired, many cells have fragmented chains. Impaired magnetic response. Has lost MamK dynamics, probably has no ATPase activity. Cells do not separate totally. No effect on MamJ movement. Magnetosome missegregation in offspring." evidence="9">
    <original>D</original>
    <variation>A</variation>
    <location>
        <position position="174"/>
    </location>
</feature>
<feature type="sequence conflict" description="In Ref. 4; CDK99592." evidence="12" ref="4">
    <location>
        <begin position="1"/>
        <end position="13"/>
    </location>
</feature>
<name>MAMK_MAGGM</name>
<sequence length="360" mass="39199">MWIDLLARERSDKMSEGEGQAKNRLFLGIDLGTSHTAVMTSRGKKFLLKSVVGYPKDVIGLKLLGRPYVVGDEAFEMRSYLDLRYPLQDGVLSEISDRDIEVARHLLTHVVKSAEPGANDEICAVIGVPARASGANKALLLKMAQEVVHTALVVSEPFMVGYGLDKLNNTIIVDIGAGTTDICALKGTVPGPEDQVTLTKAGNYLDERLQNAILERHPELQMNTNVACAVKEQFSFVGARGEAATFEFRAAGKPVRCDVTESVKIACEALMPDIIESIEILLRSFQPEYQATVLQNIVFAGGGSRIRGLAAYVKDKLRPFGNADVTCVKDPTFDGCRGALRLAEELPPQYWCQLGDVSGQ</sequence>
<organism>
    <name type="scientific">Magnetospirillum gryphiswaldense (strain DSM 6361 / JCM 21280 / NBRC 15271 / MSR-1)</name>
    <dbReference type="NCBI Taxonomy" id="431944"/>
    <lineage>
        <taxon>Bacteria</taxon>
        <taxon>Pseudomonadati</taxon>
        <taxon>Pseudomonadota</taxon>
        <taxon>Alphaproteobacteria</taxon>
        <taxon>Rhodospirillales</taxon>
        <taxon>Rhodospirillaceae</taxon>
        <taxon>Magnetospirillum</taxon>
    </lineage>
</organism>
<dbReference type="EC" id="3.6.1.-" evidence="7"/>
<dbReference type="EMBL" id="BX571797">
    <property type="protein sequence ID" value="CAE12034.1"/>
    <property type="molecule type" value="Genomic_DNA"/>
</dbReference>
<dbReference type="EMBL" id="AM085146">
    <property type="protein sequence ID" value="CAJ30118.1"/>
    <property type="molecule type" value="Genomic_DNA"/>
</dbReference>
<dbReference type="EMBL" id="CU459003">
    <property type="protein sequence ID" value="CAM78025.1"/>
    <property type="molecule type" value="Genomic_DNA"/>
</dbReference>
<dbReference type="EMBL" id="HG794546">
    <property type="protein sequence ID" value="CDK99592.1"/>
    <property type="status" value="ALT_INIT"/>
    <property type="molecule type" value="Genomic_DNA"/>
</dbReference>
<dbReference type="SMR" id="Q6NE59"/>
<dbReference type="STRING" id="1430440.MGMSRv2__2377"/>
<dbReference type="KEGG" id="mgy:MGMSRv2__2377"/>
<dbReference type="eggNOG" id="COG1077">
    <property type="taxonomic scope" value="Bacteria"/>
</dbReference>
<dbReference type="HOGENOM" id="CLU_052037_3_0_5"/>
<dbReference type="Proteomes" id="UP000018922">
    <property type="component" value="Chromosome I"/>
</dbReference>
<dbReference type="GO" id="GO:0005737">
    <property type="term" value="C:cytoplasm"/>
    <property type="evidence" value="ECO:0007669"/>
    <property type="project" value="UniProtKB-SubCell"/>
</dbReference>
<dbReference type="GO" id="GO:0005856">
    <property type="term" value="C:cytoskeleton"/>
    <property type="evidence" value="ECO:0000314"/>
    <property type="project" value="UniProtKB"/>
</dbReference>
<dbReference type="GO" id="GO:0005524">
    <property type="term" value="F:ATP binding"/>
    <property type="evidence" value="ECO:0007669"/>
    <property type="project" value="UniProtKB-KW"/>
</dbReference>
<dbReference type="GO" id="GO:0016887">
    <property type="term" value="F:ATP hydrolysis activity"/>
    <property type="evidence" value="ECO:0007669"/>
    <property type="project" value="RHEA"/>
</dbReference>
<dbReference type="GO" id="GO:0005525">
    <property type="term" value="F:GTP binding"/>
    <property type="evidence" value="ECO:0007669"/>
    <property type="project" value="UniProtKB-KW"/>
</dbReference>
<dbReference type="GO" id="GO:0046872">
    <property type="term" value="F:metal ion binding"/>
    <property type="evidence" value="ECO:0007669"/>
    <property type="project" value="UniProtKB-KW"/>
</dbReference>
<dbReference type="GO" id="GO:0140923">
    <property type="term" value="P:magnetosome assembly"/>
    <property type="evidence" value="ECO:0000315"/>
    <property type="project" value="UniProtKB"/>
</dbReference>
<dbReference type="CDD" id="cd24009">
    <property type="entry name" value="ASKHA_NBD_MamK"/>
    <property type="match status" value="1"/>
</dbReference>
<dbReference type="Gene3D" id="3.30.420.40">
    <property type="match status" value="3"/>
</dbReference>
<dbReference type="InterPro" id="IPR004000">
    <property type="entry name" value="Actin"/>
</dbReference>
<dbReference type="InterPro" id="IPR043129">
    <property type="entry name" value="ATPase_NBD"/>
</dbReference>
<dbReference type="InterPro" id="IPR056546">
    <property type="entry name" value="MreB_MamK-like"/>
</dbReference>
<dbReference type="NCBIfam" id="NF040964">
    <property type="entry name" value="MamK"/>
    <property type="match status" value="1"/>
</dbReference>
<dbReference type="PANTHER" id="PTHR42749">
    <property type="entry name" value="CELL SHAPE-DETERMINING PROTEIN MREB"/>
    <property type="match status" value="1"/>
</dbReference>
<dbReference type="PANTHER" id="PTHR42749:SF1">
    <property type="entry name" value="CELL SHAPE-DETERMINING PROTEIN MREB"/>
    <property type="match status" value="1"/>
</dbReference>
<dbReference type="Pfam" id="PF06723">
    <property type="entry name" value="MreB_Mbl"/>
    <property type="match status" value="1"/>
</dbReference>
<dbReference type="PRINTS" id="PR00301">
    <property type="entry name" value="HEATSHOCK70"/>
</dbReference>
<dbReference type="SMART" id="SM00268">
    <property type="entry name" value="ACTIN"/>
    <property type="match status" value="1"/>
</dbReference>
<dbReference type="SUPFAM" id="SSF53067">
    <property type="entry name" value="Actin-like ATPase domain"/>
    <property type="match status" value="2"/>
</dbReference>
<evidence type="ECO:0000250" key="1">
    <source>
        <dbReference type="UniProtKB" id="Q2W8Q6"/>
    </source>
</evidence>
<evidence type="ECO:0000269" key="2">
    <source>
    </source>
</evidence>
<evidence type="ECO:0000269" key="3">
    <source>
    </source>
</evidence>
<evidence type="ECO:0000269" key="4">
    <source>
    </source>
</evidence>
<evidence type="ECO:0000269" key="5">
    <source>
    </source>
</evidence>
<evidence type="ECO:0000269" key="6">
    <source>
    </source>
</evidence>
<evidence type="ECO:0000269" key="7">
    <source>
    </source>
</evidence>
<evidence type="ECO:0000269" key="8">
    <source>
    </source>
</evidence>
<evidence type="ECO:0000269" key="9">
    <source>
    </source>
</evidence>
<evidence type="ECO:0000303" key="10">
    <source>
    </source>
</evidence>
<evidence type="ECO:0000303" key="11">
    <source>
    </source>
</evidence>
<evidence type="ECO:0000305" key="12"/>
<evidence type="ECO:0000305" key="13">
    <source>
    </source>
</evidence>
<evidence type="ECO:0000305" key="14">
    <source>
    </source>
</evidence>
<evidence type="ECO:0000305" key="15">
    <source>
    </source>
</evidence>
<evidence type="ECO:0000305" key="16">
    <source>
    </source>
</evidence>
<evidence type="ECO:0000305" key="17">
    <source>
    </source>
</evidence>
<evidence type="ECO:0000305" key="18">
    <source>
    </source>
</evidence>
<evidence type="ECO:0000305" key="19">
    <source>
    </source>
</evidence>
<accession>Q6NE59</accession>
<accession>V6F2H8</accession>
<proteinExistence type="evidence at protein level"/>